<comment type="function">
    <text evidence="1">Component of the dark-operative protochlorophyllide reductase (DPOR) that uses Mg-ATP and reduced ferredoxin to reduce ring D of protochlorophyllide (Pchlide) to form chlorophyllide a (Chlide). This reaction is light-independent. The NB-protein (ChlN-ChlB) is the catalytic component of the complex.</text>
</comment>
<comment type="catalytic activity">
    <reaction evidence="1">
        <text>chlorophyllide a + oxidized 2[4Fe-4S]-[ferredoxin] + 2 ADP + 2 phosphate = protochlorophyllide a + reduced 2[4Fe-4S]-[ferredoxin] + 2 ATP + 2 H2O</text>
        <dbReference type="Rhea" id="RHEA:28202"/>
        <dbReference type="Rhea" id="RHEA-COMP:10002"/>
        <dbReference type="Rhea" id="RHEA-COMP:10004"/>
        <dbReference type="ChEBI" id="CHEBI:15377"/>
        <dbReference type="ChEBI" id="CHEBI:30616"/>
        <dbReference type="ChEBI" id="CHEBI:33722"/>
        <dbReference type="ChEBI" id="CHEBI:33723"/>
        <dbReference type="ChEBI" id="CHEBI:43474"/>
        <dbReference type="ChEBI" id="CHEBI:83348"/>
        <dbReference type="ChEBI" id="CHEBI:83350"/>
        <dbReference type="ChEBI" id="CHEBI:456216"/>
        <dbReference type="EC" id="1.3.7.7"/>
    </reaction>
</comment>
<comment type="cofactor">
    <cofactor evidence="1">
        <name>[4Fe-4S] cluster</name>
        <dbReference type="ChEBI" id="CHEBI:49883"/>
    </cofactor>
    <text evidence="1">Binds 1 [4Fe-4S] cluster per heterodimer. The cluster is bound at the heterodimer interface by residues from both subunits.</text>
</comment>
<comment type="pathway">
    <text evidence="1">Porphyrin-containing compound metabolism; chlorophyll biosynthesis (light-independent).</text>
</comment>
<comment type="subunit">
    <text evidence="1">Protochlorophyllide reductase is composed of three subunits; ChlL, ChlN and ChlB. Forms a heterotetramer of two ChlB and two ChlN subunits.</text>
</comment>
<comment type="similarity">
    <text evidence="1">Belongs to the ChlB/BchB/BchZ family.</text>
</comment>
<evidence type="ECO:0000255" key="1">
    <source>
        <dbReference type="HAMAP-Rule" id="MF_00353"/>
    </source>
</evidence>
<keyword id="KW-0004">4Fe-4S</keyword>
<keyword id="KW-0067">ATP-binding</keyword>
<keyword id="KW-0149">Chlorophyll biosynthesis</keyword>
<keyword id="KW-0408">Iron</keyword>
<keyword id="KW-0411">Iron-sulfur</keyword>
<keyword id="KW-0479">Metal-binding</keyword>
<keyword id="KW-0547">Nucleotide-binding</keyword>
<keyword id="KW-0560">Oxidoreductase</keyword>
<keyword id="KW-0602">Photosynthesis</keyword>
<keyword id="KW-1185">Reference proteome</keyword>
<proteinExistence type="inferred from homology"/>
<gene>
    <name evidence="1" type="primary">chlB</name>
    <name type="ordered locus">Syncc9902_1620</name>
</gene>
<reference key="1">
    <citation type="submission" date="2005-08" db="EMBL/GenBank/DDBJ databases">
        <title>Complete sequence of Synechococcus sp. CC9902.</title>
        <authorList>
            <person name="Copeland A."/>
            <person name="Lucas S."/>
            <person name="Lapidus A."/>
            <person name="Barry K."/>
            <person name="Detter J.C."/>
            <person name="Glavina T."/>
            <person name="Hammon N."/>
            <person name="Israni S."/>
            <person name="Pitluck S."/>
            <person name="Martinez M."/>
            <person name="Schmutz J."/>
            <person name="Larimer F."/>
            <person name="Land M."/>
            <person name="Kyrpides N."/>
            <person name="Ivanova N."/>
            <person name="Richardson P."/>
        </authorList>
    </citation>
    <scope>NUCLEOTIDE SEQUENCE [LARGE SCALE GENOMIC DNA]</scope>
    <source>
        <strain>CC9902</strain>
    </source>
</reference>
<sequence>MELTLWTYEGPPHVGAMRIAASMKGVHYVLHAPQGDTYADLLFTMIERRGKRPPVTYTTFQARDLGGDTAELVKRHIREAVERFKPDALLVGESCTAELIQDQPGALAGGMGFDLPIVSLELPAYSKKENWGASETLYQLVRGLLKNQEINSEGHNPKAWQNQGRRPRVNLIGPSLLGFRCRDDVIEISRLLASHGIDVNTVVPLEATVADVMRLTEADLNICLYAEISESCCSWMERQFGMPFSRTMPIGVGATADFLAEVHGLLGMDPPDPREGEHSSKLPWYSASVDSTYLTGKRVFIFGDGSHVLAAARIANEELGFQVVGLGTYSREMARPVRAAAKELGLEALISDDYLAVEAAMAEAVPELVLGTQMERHSAKRLGIPCAVISTPMHVQDVPARFSPQMGWEGANVIFDSWVHPLMMGLEEHLIGMFRHDFEFVDGHQSHLGHLGGLQSAQVEDAPAAIANNSTETHAIEADTSSVAVATATLEWTMDGEAELKKIPFFVRGKVRRNTEAFAKEKGLNQIDSETLYDAKAHYSA</sequence>
<name>CHLB_SYNS9</name>
<organism>
    <name type="scientific">Synechococcus sp. (strain CC9902)</name>
    <dbReference type="NCBI Taxonomy" id="316279"/>
    <lineage>
        <taxon>Bacteria</taxon>
        <taxon>Bacillati</taxon>
        <taxon>Cyanobacteriota</taxon>
        <taxon>Cyanophyceae</taxon>
        <taxon>Synechococcales</taxon>
        <taxon>Synechococcaceae</taxon>
        <taxon>Synechococcus</taxon>
    </lineage>
</organism>
<dbReference type="EC" id="1.3.7.7" evidence="1"/>
<dbReference type="EMBL" id="CP000097">
    <property type="protein sequence ID" value="ABB26578.1"/>
    <property type="molecule type" value="Genomic_DNA"/>
</dbReference>
<dbReference type="RefSeq" id="WP_011360389.1">
    <property type="nucleotide sequence ID" value="NC_007513.1"/>
</dbReference>
<dbReference type="SMR" id="Q3AWT5"/>
<dbReference type="STRING" id="316279.Syncc9902_1620"/>
<dbReference type="KEGG" id="sye:Syncc9902_1620"/>
<dbReference type="eggNOG" id="COG2710">
    <property type="taxonomic scope" value="Bacteria"/>
</dbReference>
<dbReference type="HOGENOM" id="CLU_025470_0_0_3"/>
<dbReference type="OrthoDB" id="5717231at2"/>
<dbReference type="UniPathway" id="UPA00670"/>
<dbReference type="Proteomes" id="UP000002712">
    <property type="component" value="Chromosome"/>
</dbReference>
<dbReference type="GO" id="GO:0051539">
    <property type="term" value="F:4 iron, 4 sulfur cluster binding"/>
    <property type="evidence" value="ECO:0007669"/>
    <property type="project" value="UniProtKB-UniRule"/>
</dbReference>
<dbReference type="GO" id="GO:0005524">
    <property type="term" value="F:ATP binding"/>
    <property type="evidence" value="ECO:0007669"/>
    <property type="project" value="UniProtKB-UniRule"/>
</dbReference>
<dbReference type="GO" id="GO:0046872">
    <property type="term" value="F:metal ion binding"/>
    <property type="evidence" value="ECO:0007669"/>
    <property type="project" value="UniProtKB-KW"/>
</dbReference>
<dbReference type="GO" id="GO:0016730">
    <property type="term" value="F:oxidoreductase activity, acting on iron-sulfur proteins as donors"/>
    <property type="evidence" value="ECO:0007669"/>
    <property type="project" value="InterPro"/>
</dbReference>
<dbReference type="GO" id="GO:0016636">
    <property type="term" value="F:oxidoreductase activity, acting on the CH-CH group of donors, iron-sulfur protein as acceptor"/>
    <property type="evidence" value="ECO:0007669"/>
    <property type="project" value="UniProtKB-UniRule"/>
</dbReference>
<dbReference type="GO" id="GO:0036068">
    <property type="term" value="P:light-independent chlorophyll biosynthetic process"/>
    <property type="evidence" value="ECO:0007669"/>
    <property type="project" value="UniProtKB-UniRule"/>
</dbReference>
<dbReference type="GO" id="GO:0019685">
    <property type="term" value="P:photosynthesis, dark reaction"/>
    <property type="evidence" value="ECO:0007669"/>
    <property type="project" value="InterPro"/>
</dbReference>
<dbReference type="Gene3D" id="1.20.89.20">
    <property type="match status" value="1"/>
</dbReference>
<dbReference type="Gene3D" id="3.40.50.1980">
    <property type="entry name" value="Nitrogenase molybdenum iron protein domain"/>
    <property type="match status" value="3"/>
</dbReference>
<dbReference type="Gene3D" id="1.10.8.550">
    <property type="entry name" value="Proto-chlorophyllide reductase 57 kD subunit B"/>
    <property type="match status" value="1"/>
</dbReference>
<dbReference type="HAMAP" id="MF_00353">
    <property type="entry name" value="ChlB_BchB"/>
    <property type="match status" value="1"/>
</dbReference>
<dbReference type="InterPro" id="IPR050152">
    <property type="entry name" value="ChlB/BchB/BchZ"/>
</dbReference>
<dbReference type="InterPro" id="IPR013580">
    <property type="entry name" value="LI-POR_suB-like_C"/>
</dbReference>
<dbReference type="InterPro" id="IPR000510">
    <property type="entry name" value="Nase/OxRdtase_comp1"/>
</dbReference>
<dbReference type="InterPro" id="IPR042298">
    <property type="entry name" value="P-CP_red_C"/>
</dbReference>
<dbReference type="InterPro" id="IPR005969">
    <property type="entry name" value="Protochl_reductB"/>
</dbReference>
<dbReference type="InterPro" id="IPR016209">
    <property type="entry name" value="Protochlorophyllide_Rdtase"/>
</dbReference>
<dbReference type="NCBIfam" id="TIGR01278">
    <property type="entry name" value="DPOR_BchB"/>
    <property type="match status" value="1"/>
</dbReference>
<dbReference type="NCBIfam" id="NF002790">
    <property type="entry name" value="PRK02910.1-4"/>
    <property type="match status" value="1"/>
</dbReference>
<dbReference type="PANTHER" id="PTHR33712">
    <property type="entry name" value="LIGHT-INDEPENDENT PROTOCHLOROPHYLLIDE REDUCTASE SUBUNIT B"/>
    <property type="match status" value="1"/>
</dbReference>
<dbReference type="PANTHER" id="PTHR33712:SF7">
    <property type="entry name" value="LIGHT-INDEPENDENT PROTOCHLOROPHYLLIDE REDUCTASE SUBUNIT B"/>
    <property type="match status" value="1"/>
</dbReference>
<dbReference type="Pfam" id="PF00148">
    <property type="entry name" value="Oxidored_nitro"/>
    <property type="match status" value="1"/>
</dbReference>
<dbReference type="Pfam" id="PF08369">
    <property type="entry name" value="PCP_red"/>
    <property type="match status" value="1"/>
</dbReference>
<dbReference type="PIRSF" id="PIRSF000163">
    <property type="entry name" value="PCP_ChlB"/>
    <property type="match status" value="1"/>
</dbReference>
<dbReference type="SUPFAM" id="SSF53807">
    <property type="entry name" value="Helical backbone' metal receptor"/>
    <property type="match status" value="1"/>
</dbReference>
<accession>Q3AWT5</accession>
<protein>
    <recommendedName>
        <fullName evidence="1">Light-independent protochlorophyllide reductase subunit B</fullName>
        <shortName evidence="1">DPOR subunit B</shortName>
        <shortName evidence="1">LI-POR subunit B</shortName>
        <ecNumber evidence="1">1.3.7.7</ecNumber>
    </recommendedName>
</protein>
<feature type="chain" id="PRO_1000048430" description="Light-independent protochlorophyllide reductase subunit B">
    <location>
        <begin position="1"/>
        <end position="541"/>
    </location>
</feature>
<feature type="active site" description="Proton donor" evidence="1">
    <location>
        <position position="290"/>
    </location>
</feature>
<feature type="binding site" evidence="1">
    <location>
        <position position="36"/>
    </location>
    <ligand>
        <name>[4Fe-4S] cluster</name>
        <dbReference type="ChEBI" id="CHEBI:49883"/>
        <note>ligand shared with heterodimeric partner</note>
    </ligand>
</feature>
<feature type="binding site" evidence="1">
    <location>
        <begin position="425"/>
        <end position="426"/>
    </location>
    <ligand>
        <name>substrate</name>
    </ligand>
</feature>